<protein>
    <recommendedName>
        <fullName evidence="1">MEMO1 family protein MM_1761</fullName>
    </recommendedName>
</protein>
<name>Y1761_METMA</name>
<reference key="1">
    <citation type="journal article" date="2002" name="J. Mol. Microbiol. Biotechnol.">
        <title>The genome of Methanosarcina mazei: evidence for lateral gene transfer between Bacteria and Archaea.</title>
        <authorList>
            <person name="Deppenmeier U."/>
            <person name="Johann A."/>
            <person name="Hartsch T."/>
            <person name="Merkl R."/>
            <person name="Schmitz R.A."/>
            <person name="Martinez-Arias R."/>
            <person name="Henne A."/>
            <person name="Wiezer A."/>
            <person name="Baeumer S."/>
            <person name="Jacobi C."/>
            <person name="Brueggemann H."/>
            <person name="Lienard T."/>
            <person name="Christmann A."/>
            <person name="Boemecke M."/>
            <person name="Steckel S."/>
            <person name="Bhattacharyya A."/>
            <person name="Lykidis A."/>
            <person name="Overbeek R."/>
            <person name="Klenk H.-P."/>
            <person name="Gunsalus R.P."/>
            <person name="Fritz H.-J."/>
            <person name="Gottschalk G."/>
        </authorList>
    </citation>
    <scope>NUCLEOTIDE SEQUENCE [LARGE SCALE GENOMIC DNA]</scope>
    <source>
        <strain>ATCC BAA-159 / DSM 3647 / Goe1 / Go1 / JCM 11833 / OCM 88</strain>
    </source>
</reference>
<organism>
    <name type="scientific">Methanosarcina mazei (strain ATCC BAA-159 / DSM 3647 / Goe1 / Go1 / JCM 11833 / OCM 88)</name>
    <name type="common">Methanosarcina frisia</name>
    <dbReference type="NCBI Taxonomy" id="192952"/>
    <lineage>
        <taxon>Archaea</taxon>
        <taxon>Methanobacteriati</taxon>
        <taxon>Methanobacteriota</taxon>
        <taxon>Stenosarchaea group</taxon>
        <taxon>Methanomicrobia</taxon>
        <taxon>Methanosarcinales</taxon>
        <taxon>Methanosarcinaceae</taxon>
        <taxon>Methanosarcina</taxon>
    </lineage>
</organism>
<evidence type="ECO:0000255" key="1">
    <source>
        <dbReference type="HAMAP-Rule" id="MF_00055"/>
    </source>
</evidence>
<comment type="similarity">
    <text evidence="1">Belongs to the MEMO1 family.</text>
</comment>
<dbReference type="EMBL" id="AE008384">
    <property type="protein sequence ID" value="AAM31457.1"/>
    <property type="molecule type" value="Genomic_DNA"/>
</dbReference>
<dbReference type="RefSeq" id="WP_011033701.1">
    <property type="nucleotide sequence ID" value="NC_003901.1"/>
</dbReference>
<dbReference type="SMR" id="Q8PW40"/>
<dbReference type="KEGG" id="mma:MM_1761"/>
<dbReference type="PATRIC" id="fig|192952.21.peg.2037"/>
<dbReference type="eggNOG" id="arCOG01728">
    <property type="taxonomic scope" value="Archaea"/>
</dbReference>
<dbReference type="HOGENOM" id="CLU_038085_2_0_2"/>
<dbReference type="Proteomes" id="UP000000595">
    <property type="component" value="Chromosome"/>
</dbReference>
<dbReference type="CDD" id="cd07361">
    <property type="entry name" value="MEMO_like"/>
    <property type="match status" value="1"/>
</dbReference>
<dbReference type="Gene3D" id="3.40.830.10">
    <property type="entry name" value="LigB-like"/>
    <property type="match status" value="1"/>
</dbReference>
<dbReference type="HAMAP" id="MF_00055">
    <property type="entry name" value="MEMO1"/>
    <property type="match status" value="1"/>
</dbReference>
<dbReference type="InterPro" id="IPR002737">
    <property type="entry name" value="MEMO1_fam"/>
</dbReference>
<dbReference type="NCBIfam" id="TIGR04336">
    <property type="entry name" value="AmmeMemoSam_B"/>
    <property type="match status" value="1"/>
</dbReference>
<dbReference type="NCBIfam" id="NF001987">
    <property type="entry name" value="PRK00782.1"/>
    <property type="match status" value="1"/>
</dbReference>
<dbReference type="PANTHER" id="PTHR11060">
    <property type="entry name" value="PROTEIN MEMO1"/>
    <property type="match status" value="1"/>
</dbReference>
<dbReference type="PANTHER" id="PTHR11060:SF0">
    <property type="entry name" value="PROTEIN MEMO1"/>
    <property type="match status" value="1"/>
</dbReference>
<dbReference type="Pfam" id="PF01875">
    <property type="entry name" value="Memo"/>
    <property type="match status" value="1"/>
</dbReference>
<dbReference type="SUPFAM" id="SSF53213">
    <property type="entry name" value="LigB-like"/>
    <property type="match status" value="1"/>
</dbReference>
<accession>Q8PW40</accession>
<proteinExistence type="inferred from homology"/>
<gene>
    <name type="ordered locus">MM_1761</name>
</gene>
<sequence>MEMRQPAVAGQFYPLRCENLENELKRCFEGLEIREQEVLGAVCPHAGYMYSGKVAAHVYATLPEADTYVIFGPNHTGYGSPVSVSRETWKTPLGNIDVDLELADGFLGSIVDADELGHKYEHSIEVQLPFLQYRFERDFKILPICMGMQDEETAVEVGNLLADLISESGKRAVIIASSDFTHYETAERAKEIDSEVIDSILNFDISGMYDRLYRRNASVCGYGPITAMLTASKKLGGSRATLLKYANSGDVSGDKDAVVGYAAIIVE</sequence>
<feature type="chain" id="PRO_0000134381" description="MEMO1 family protein MM_1761">
    <location>
        <begin position="1"/>
        <end position="267"/>
    </location>
</feature>